<sequence>MSGMLGLSAVMGKRPKQQVTARPRKCPIEKPEEIPDDLLIDVFSRLSIEDVARCRCLSRFWSSILRRRYFTELFHKMSSTRPRILFTFLYYGKRLFYSMPQDLDPSNHYSPLPYFSISYSPISAHYQMHFPKVLGASAKVCPPILGLICCKSSKTMIFNPSTRESKFISTTKRVGVKSTSFGYDPIDKLFKVLSMSDDFVCRVSTLGTEVVTWRTVECSVPHHPLHSEICMDGVLYYLARRVGDETPKPYMVAAFEVRLERFKFLPMDLRCKHIGCSAVIDYKGKLAVVWLNVDRDNQRHIESFELRVLNDVDEVKWSQIIYELPNYWNNLPADIDVSIVGMTSAGEIVLATSHIRHPFYIFYYSTVTLAIVQLRIDFGIEAPEANHCSTMSTFVNHVENVELACGLGLSSIAM</sequence>
<accession>Q9SD70</accession>
<feature type="chain" id="PRO_0000283465" description="F-box protein At3g47030">
    <location>
        <begin position="1"/>
        <end position="414"/>
    </location>
</feature>
<feature type="domain" description="F-box" evidence="1">
    <location>
        <begin position="28"/>
        <end position="77"/>
    </location>
</feature>
<feature type="region of interest" description="Disordered" evidence="2">
    <location>
        <begin position="1"/>
        <end position="24"/>
    </location>
</feature>
<evidence type="ECO:0000255" key="1">
    <source>
        <dbReference type="PROSITE-ProRule" id="PRU00080"/>
    </source>
</evidence>
<evidence type="ECO:0000256" key="2">
    <source>
        <dbReference type="SAM" id="MobiDB-lite"/>
    </source>
</evidence>
<keyword id="KW-1185">Reference proteome</keyword>
<protein>
    <recommendedName>
        <fullName>F-box protein At3g47030</fullName>
    </recommendedName>
</protein>
<gene>
    <name type="ordered locus">At3g47030</name>
    <name type="ORF">F13I12.80</name>
</gene>
<reference key="1">
    <citation type="journal article" date="2000" name="Nature">
        <title>Sequence and analysis of chromosome 3 of the plant Arabidopsis thaliana.</title>
        <authorList>
            <person name="Salanoubat M."/>
            <person name="Lemcke K."/>
            <person name="Rieger M."/>
            <person name="Ansorge W."/>
            <person name="Unseld M."/>
            <person name="Fartmann B."/>
            <person name="Valle G."/>
            <person name="Bloecker H."/>
            <person name="Perez-Alonso M."/>
            <person name="Obermaier B."/>
            <person name="Delseny M."/>
            <person name="Boutry M."/>
            <person name="Grivell L.A."/>
            <person name="Mache R."/>
            <person name="Puigdomenech P."/>
            <person name="De Simone V."/>
            <person name="Choisne N."/>
            <person name="Artiguenave F."/>
            <person name="Robert C."/>
            <person name="Brottier P."/>
            <person name="Wincker P."/>
            <person name="Cattolico L."/>
            <person name="Weissenbach J."/>
            <person name="Saurin W."/>
            <person name="Quetier F."/>
            <person name="Schaefer M."/>
            <person name="Mueller-Auer S."/>
            <person name="Gabel C."/>
            <person name="Fuchs M."/>
            <person name="Benes V."/>
            <person name="Wurmbach E."/>
            <person name="Drzonek H."/>
            <person name="Erfle H."/>
            <person name="Jordan N."/>
            <person name="Bangert S."/>
            <person name="Wiedelmann R."/>
            <person name="Kranz H."/>
            <person name="Voss H."/>
            <person name="Holland R."/>
            <person name="Brandt P."/>
            <person name="Nyakatura G."/>
            <person name="Vezzi A."/>
            <person name="D'Angelo M."/>
            <person name="Pallavicini A."/>
            <person name="Toppo S."/>
            <person name="Simionati B."/>
            <person name="Conrad A."/>
            <person name="Hornischer K."/>
            <person name="Kauer G."/>
            <person name="Loehnert T.-H."/>
            <person name="Nordsiek G."/>
            <person name="Reichelt J."/>
            <person name="Scharfe M."/>
            <person name="Schoen O."/>
            <person name="Bargues M."/>
            <person name="Terol J."/>
            <person name="Climent J."/>
            <person name="Navarro P."/>
            <person name="Collado C."/>
            <person name="Perez-Perez A."/>
            <person name="Ottenwaelder B."/>
            <person name="Duchemin D."/>
            <person name="Cooke R."/>
            <person name="Laudie M."/>
            <person name="Berger-Llauro C."/>
            <person name="Purnelle B."/>
            <person name="Masuy D."/>
            <person name="de Haan M."/>
            <person name="Maarse A.C."/>
            <person name="Alcaraz J.-P."/>
            <person name="Cottet A."/>
            <person name="Casacuberta E."/>
            <person name="Monfort A."/>
            <person name="Argiriou A."/>
            <person name="Flores M."/>
            <person name="Liguori R."/>
            <person name="Vitale D."/>
            <person name="Mannhaupt G."/>
            <person name="Haase D."/>
            <person name="Schoof H."/>
            <person name="Rudd S."/>
            <person name="Zaccaria P."/>
            <person name="Mewes H.-W."/>
            <person name="Mayer K.F.X."/>
            <person name="Kaul S."/>
            <person name="Town C.D."/>
            <person name="Koo H.L."/>
            <person name="Tallon L.J."/>
            <person name="Jenkins J."/>
            <person name="Rooney T."/>
            <person name="Rizzo M."/>
            <person name="Walts A."/>
            <person name="Utterback T."/>
            <person name="Fujii C.Y."/>
            <person name="Shea T.P."/>
            <person name="Creasy T.H."/>
            <person name="Haas B."/>
            <person name="Maiti R."/>
            <person name="Wu D."/>
            <person name="Peterson J."/>
            <person name="Van Aken S."/>
            <person name="Pai G."/>
            <person name="Militscher J."/>
            <person name="Sellers P."/>
            <person name="Gill J.E."/>
            <person name="Feldblyum T.V."/>
            <person name="Preuss D."/>
            <person name="Lin X."/>
            <person name="Nierman W.C."/>
            <person name="Salzberg S.L."/>
            <person name="White O."/>
            <person name="Venter J.C."/>
            <person name="Fraser C.M."/>
            <person name="Kaneko T."/>
            <person name="Nakamura Y."/>
            <person name="Sato S."/>
            <person name="Kato T."/>
            <person name="Asamizu E."/>
            <person name="Sasamoto S."/>
            <person name="Kimura T."/>
            <person name="Idesawa K."/>
            <person name="Kawashima K."/>
            <person name="Kishida Y."/>
            <person name="Kiyokawa C."/>
            <person name="Kohara M."/>
            <person name="Matsumoto M."/>
            <person name="Matsuno A."/>
            <person name="Muraki A."/>
            <person name="Nakayama S."/>
            <person name="Nakazaki N."/>
            <person name="Shinpo S."/>
            <person name="Takeuchi C."/>
            <person name="Wada T."/>
            <person name="Watanabe A."/>
            <person name="Yamada M."/>
            <person name="Yasuda M."/>
            <person name="Tabata S."/>
        </authorList>
    </citation>
    <scope>NUCLEOTIDE SEQUENCE [LARGE SCALE GENOMIC DNA]</scope>
    <source>
        <strain>cv. Columbia</strain>
    </source>
</reference>
<reference key="2">
    <citation type="journal article" date="2017" name="Plant J.">
        <title>Araport11: a complete reannotation of the Arabidopsis thaliana reference genome.</title>
        <authorList>
            <person name="Cheng C.Y."/>
            <person name="Krishnakumar V."/>
            <person name="Chan A.P."/>
            <person name="Thibaud-Nissen F."/>
            <person name="Schobel S."/>
            <person name="Town C.D."/>
        </authorList>
    </citation>
    <scope>GENOME REANNOTATION</scope>
    <source>
        <strain>cv. Columbia</strain>
    </source>
</reference>
<reference key="3">
    <citation type="journal article" date="2003" name="Science">
        <title>Empirical analysis of transcriptional activity in the Arabidopsis genome.</title>
        <authorList>
            <person name="Yamada K."/>
            <person name="Lim J."/>
            <person name="Dale J.M."/>
            <person name="Chen H."/>
            <person name="Shinn P."/>
            <person name="Palm C.J."/>
            <person name="Southwick A.M."/>
            <person name="Wu H.C."/>
            <person name="Kim C.J."/>
            <person name="Nguyen M."/>
            <person name="Pham P.K."/>
            <person name="Cheuk R.F."/>
            <person name="Karlin-Newmann G."/>
            <person name="Liu S.X."/>
            <person name="Lam B."/>
            <person name="Sakano H."/>
            <person name="Wu T."/>
            <person name="Yu G."/>
            <person name="Miranda M."/>
            <person name="Quach H.L."/>
            <person name="Tripp M."/>
            <person name="Chang C.H."/>
            <person name="Lee J.M."/>
            <person name="Toriumi M.J."/>
            <person name="Chan M.M."/>
            <person name="Tang C.C."/>
            <person name="Onodera C.S."/>
            <person name="Deng J.M."/>
            <person name="Akiyama K."/>
            <person name="Ansari Y."/>
            <person name="Arakawa T."/>
            <person name="Banh J."/>
            <person name="Banno F."/>
            <person name="Bowser L."/>
            <person name="Brooks S.Y."/>
            <person name="Carninci P."/>
            <person name="Chao Q."/>
            <person name="Choy N."/>
            <person name="Enju A."/>
            <person name="Goldsmith A.D."/>
            <person name="Gurjal M."/>
            <person name="Hansen N.F."/>
            <person name="Hayashizaki Y."/>
            <person name="Johnson-Hopson C."/>
            <person name="Hsuan V.W."/>
            <person name="Iida K."/>
            <person name="Karnes M."/>
            <person name="Khan S."/>
            <person name="Koesema E."/>
            <person name="Ishida J."/>
            <person name="Jiang P.X."/>
            <person name="Jones T."/>
            <person name="Kawai J."/>
            <person name="Kamiya A."/>
            <person name="Meyers C."/>
            <person name="Nakajima M."/>
            <person name="Narusaka M."/>
            <person name="Seki M."/>
            <person name="Sakurai T."/>
            <person name="Satou M."/>
            <person name="Tamse R."/>
            <person name="Vaysberg M."/>
            <person name="Wallender E.K."/>
            <person name="Wong C."/>
            <person name="Yamamura Y."/>
            <person name="Yuan S."/>
            <person name="Shinozaki K."/>
            <person name="Davis R.W."/>
            <person name="Theologis A."/>
            <person name="Ecker J.R."/>
        </authorList>
    </citation>
    <scope>NUCLEOTIDE SEQUENCE [LARGE SCALE MRNA]</scope>
    <source>
        <strain>cv. Columbia</strain>
    </source>
</reference>
<organism>
    <name type="scientific">Arabidopsis thaliana</name>
    <name type="common">Mouse-ear cress</name>
    <dbReference type="NCBI Taxonomy" id="3702"/>
    <lineage>
        <taxon>Eukaryota</taxon>
        <taxon>Viridiplantae</taxon>
        <taxon>Streptophyta</taxon>
        <taxon>Embryophyta</taxon>
        <taxon>Tracheophyta</taxon>
        <taxon>Spermatophyta</taxon>
        <taxon>Magnoliopsida</taxon>
        <taxon>eudicotyledons</taxon>
        <taxon>Gunneridae</taxon>
        <taxon>Pentapetalae</taxon>
        <taxon>rosids</taxon>
        <taxon>malvids</taxon>
        <taxon>Brassicales</taxon>
        <taxon>Brassicaceae</taxon>
        <taxon>Camelineae</taxon>
        <taxon>Arabidopsis</taxon>
    </lineage>
</organism>
<name>FB195_ARATH</name>
<proteinExistence type="evidence at transcript level"/>
<dbReference type="EMBL" id="AL133292">
    <property type="protein sequence ID" value="CAB61949.1"/>
    <property type="molecule type" value="Genomic_DNA"/>
</dbReference>
<dbReference type="EMBL" id="CP002686">
    <property type="protein sequence ID" value="AEE78234.1"/>
    <property type="molecule type" value="Genomic_DNA"/>
</dbReference>
<dbReference type="EMBL" id="AY102101">
    <property type="protein sequence ID" value="AAM26671.1"/>
    <property type="molecule type" value="mRNA"/>
</dbReference>
<dbReference type="EMBL" id="BT001051">
    <property type="protein sequence ID" value="AAN46805.1"/>
    <property type="molecule type" value="mRNA"/>
</dbReference>
<dbReference type="PIR" id="T45639">
    <property type="entry name" value="T45639"/>
</dbReference>
<dbReference type="RefSeq" id="NP_190287.1">
    <property type="nucleotide sequence ID" value="NM_114570.4"/>
</dbReference>
<dbReference type="SMR" id="Q9SD70"/>
<dbReference type="FunCoup" id="Q9SD70">
    <property type="interactions" value="1"/>
</dbReference>
<dbReference type="PaxDb" id="3702-AT3G47030.1"/>
<dbReference type="ProteomicsDB" id="230859"/>
<dbReference type="EnsemblPlants" id="AT3G47030.1">
    <property type="protein sequence ID" value="AT3G47030.1"/>
    <property type="gene ID" value="AT3G47030"/>
</dbReference>
<dbReference type="GeneID" id="823856"/>
<dbReference type="Gramene" id="AT3G47030.1">
    <property type="protein sequence ID" value="AT3G47030.1"/>
    <property type="gene ID" value="AT3G47030"/>
</dbReference>
<dbReference type="KEGG" id="ath:AT3G47030"/>
<dbReference type="Araport" id="AT3G47030"/>
<dbReference type="TAIR" id="AT3G47030"/>
<dbReference type="HOGENOM" id="CLU_027176_8_1_1"/>
<dbReference type="InParanoid" id="Q9SD70"/>
<dbReference type="OMA" id="YQMHFPK"/>
<dbReference type="PhylomeDB" id="Q9SD70"/>
<dbReference type="PRO" id="PR:Q9SD70"/>
<dbReference type="Proteomes" id="UP000006548">
    <property type="component" value="Chromosome 3"/>
</dbReference>
<dbReference type="ExpressionAtlas" id="Q9SD70">
    <property type="expression patterns" value="baseline and differential"/>
</dbReference>
<dbReference type="Gene3D" id="1.20.1280.50">
    <property type="match status" value="1"/>
</dbReference>
<dbReference type="InterPro" id="IPR013187">
    <property type="entry name" value="F-box-assoc_dom_typ3"/>
</dbReference>
<dbReference type="InterPro" id="IPR017451">
    <property type="entry name" value="F-box-assoc_interact_dom"/>
</dbReference>
<dbReference type="InterPro" id="IPR036047">
    <property type="entry name" value="F-box-like_dom_sf"/>
</dbReference>
<dbReference type="InterPro" id="IPR001810">
    <property type="entry name" value="F-box_dom"/>
</dbReference>
<dbReference type="NCBIfam" id="TIGR01640">
    <property type="entry name" value="F_box_assoc_1"/>
    <property type="match status" value="1"/>
</dbReference>
<dbReference type="PANTHER" id="PTHR31111">
    <property type="entry name" value="BNAA05G37150D PROTEIN-RELATED"/>
    <property type="match status" value="1"/>
</dbReference>
<dbReference type="PANTHER" id="PTHR31111:SF94">
    <property type="entry name" value="E3 UBIQUITIN-PROTEIN LIGASE SGIP1"/>
    <property type="match status" value="1"/>
</dbReference>
<dbReference type="Pfam" id="PF00646">
    <property type="entry name" value="F-box"/>
    <property type="match status" value="1"/>
</dbReference>
<dbReference type="Pfam" id="PF08268">
    <property type="entry name" value="FBA_3"/>
    <property type="match status" value="1"/>
</dbReference>
<dbReference type="SMART" id="SM00256">
    <property type="entry name" value="FBOX"/>
    <property type="match status" value="1"/>
</dbReference>
<dbReference type="SUPFAM" id="SSF81383">
    <property type="entry name" value="F-box domain"/>
    <property type="match status" value="1"/>
</dbReference>
<dbReference type="PROSITE" id="PS50181">
    <property type="entry name" value="FBOX"/>
    <property type="match status" value="1"/>
</dbReference>